<name>DPOG_SCHPO</name>
<gene>
    <name type="primary">mip1</name>
    <name type="ORF">SPCC24B10.22</name>
    <name type="ORF">SPCPB16A4.01</name>
</gene>
<reference key="1">
    <citation type="journal article" date="1995" name="Gene">
        <title>Characterization of a new DNA polymerase from Schizosaccharomyces pombe: a probable homologue of the Saccharomyces cerevisiae DNA polymerase gamma.</title>
        <authorList>
            <person name="Ropp P.A."/>
            <person name="Copeland W.C."/>
        </authorList>
    </citation>
    <scope>NUCLEOTIDE SEQUENCE [GENOMIC DNA]</scope>
    <source>
        <strain>SP808</strain>
    </source>
</reference>
<reference key="2">
    <citation type="journal article" date="2002" name="Nature">
        <title>The genome sequence of Schizosaccharomyces pombe.</title>
        <authorList>
            <person name="Wood V."/>
            <person name="Gwilliam R."/>
            <person name="Rajandream M.A."/>
            <person name="Lyne M.H."/>
            <person name="Lyne R."/>
            <person name="Stewart A."/>
            <person name="Sgouros J.G."/>
            <person name="Peat N."/>
            <person name="Hayles J."/>
            <person name="Baker S.G."/>
            <person name="Basham D."/>
            <person name="Bowman S."/>
            <person name="Brooks K."/>
            <person name="Brown D."/>
            <person name="Brown S."/>
            <person name="Chillingworth T."/>
            <person name="Churcher C.M."/>
            <person name="Collins M."/>
            <person name="Connor R."/>
            <person name="Cronin A."/>
            <person name="Davis P."/>
            <person name="Feltwell T."/>
            <person name="Fraser A."/>
            <person name="Gentles S."/>
            <person name="Goble A."/>
            <person name="Hamlin N."/>
            <person name="Harris D.E."/>
            <person name="Hidalgo J."/>
            <person name="Hodgson G."/>
            <person name="Holroyd S."/>
            <person name="Hornsby T."/>
            <person name="Howarth S."/>
            <person name="Huckle E.J."/>
            <person name="Hunt S."/>
            <person name="Jagels K."/>
            <person name="James K.D."/>
            <person name="Jones L."/>
            <person name="Jones M."/>
            <person name="Leather S."/>
            <person name="McDonald S."/>
            <person name="McLean J."/>
            <person name="Mooney P."/>
            <person name="Moule S."/>
            <person name="Mungall K.L."/>
            <person name="Murphy L.D."/>
            <person name="Niblett D."/>
            <person name="Odell C."/>
            <person name="Oliver K."/>
            <person name="O'Neil S."/>
            <person name="Pearson D."/>
            <person name="Quail M.A."/>
            <person name="Rabbinowitsch E."/>
            <person name="Rutherford K.M."/>
            <person name="Rutter S."/>
            <person name="Saunders D."/>
            <person name="Seeger K."/>
            <person name="Sharp S."/>
            <person name="Skelton J."/>
            <person name="Simmonds M.N."/>
            <person name="Squares R."/>
            <person name="Squares S."/>
            <person name="Stevens K."/>
            <person name="Taylor K."/>
            <person name="Taylor R.G."/>
            <person name="Tivey A."/>
            <person name="Walsh S.V."/>
            <person name="Warren T."/>
            <person name="Whitehead S."/>
            <person name="Woodward J.R."/>
            <person name="Volckaert G."/>
            <person name="Aert R."/>
            <person name="Robben J."/>
            <person name="Grymonprez B."/>
            <person name="Weltjens I."/>
            <person name="Vanstreels E."/>
            <person name="Rieger M."/>
            <person name="Schaefer M."/>
            <person name="Mueller-Auer S."/>
            <person name="Gabel C."/>
            <person name="Fuchs M."/>
            <person name="Duesterhoeft A."/>
            <person name="Fritzc C."/>
            <person name="Holzer E."/>
            <person name="Moestl D."/>
            <person name="Hilbert H."/>
            <person name="Borzym K."/>
            <person name="Langer I."/>
            <person name="Beck A."/>
            <person name="Lehrach H."/>
            <person name="Reinhardt R."/>
            <person name="Pohl T.M."/>
            <person name="Eger P."/>
            <person name="Zimmermann W."/>
            <person name="Wedler H."/>
            <person name="Wambutt R."/>
            <person name="Purnelle B."/>
            <person name="Goffeau A."/>
            <person name="Cadieu E."/>
            <person name="Dreano S."/>
            <person name="Gloux S."/>
            <person name="Lelaure V."/>
            <person name="Mottier S."/>
            <person name="Galibert F."/>
            <person name="Aves S.J."/>
            <person name="Xiang Z."/>
            <person name="Hunt C."/>
            <person name="Moore K."/>
            <person name="Hurst S.M."/>
            <person name="Lucas M."/>
            <person name="Rochet M."/>
            <person name="Gaillardin C."/>
            <person name="Tallada V.A."/>
            <person name="Garzon A."/>
            <person name="Thode G."/>
            <person name="Daga R.R."/>
            <person name="Cruzado L."/>
            <person name="Jimenez J."/>
            <person name="Sanchez M."/>
            <person name="del Rey F."/>
            <person name="Benito J."/>
            <person name="Dominguez A."/>
            <person name="Revuelta J.L."/>
            <person name="Moreno S."/>
            <person name="Armstrong J."/>
            <person name="Forsburg S.L."/>
            <person name="Cerutti L."/>
            <person name="Lowe T."/>
            <person name="McCombie W.R."/>
            <person name="Paulsen I."/>
            <person name="Potashkin J."/>
            <person name="Shpakovski G.V."/>
            <person name="Ussery D."/>
            <person name="Barrell B.G."/>
            <person name="Nurse P."/>
        </authorList>
    </citation>
    <scope>NUCLEOTIDE SEQUENCE [LARGE SCALE GENOMIC DNA]</scope>
    <source>
        <strain>972 / ATCC 24843</strain>
    </source>
</reference>
<protein>
    <recommendedName>
        <fullName>DNA polymerase gamma</fullName>
        <ecNumber>2.7.7.7</ecNumber>
    </recommendedName>
    <alternativeName>
        <fullName>Mitochondrial DNA polymerase catalytic subunit</fullName>
    </alternativeName>
</protein>
<evidence type="ECO:0000305" key="1"/>
<keyword id="KW-0235">DNA replication</keyword>
<keyword id="KW-0238">DNA-binding</keyword>
<keyword id="KW-0239">DNA-directed DNA polymerase</keyword>
<keyword id="KW-0460">Magnesium</keyword>
<keyword id="KW-0496">Mitochondrion</keyword>
<keyword id="KW-0548">Nucleotidyltransferase</keyword>
<keyword id="KW-1185">Reference proteome</keyword>
<keyword id="KW-0808">Transferase</keyword>
<comment type="function">
    <text>Involved in the replication of mitochondrial DNA.</text>
</comment>
<comment type="catalytic activity">
    <reaction>
        <text>DNA(n) + a 2'-deoxyribonucleoside 5'-triphosphate = DNA(n+1) + diphosphate</text>
        <dbReference type="Rhea" id="RHEA:22508"/>
        <dbReference type="Rhea" id="RHEA-COMP:17339"/>
        <dbReference type="Rhea" id="RHEA-COMP:17340"/>
        <dbReference type="ChEBI" id="CHEBI:33019"/>
        <dbReference type="ChEBI" id="CHEBI:61560"/>
        <dbReference type="ChEBI" id="CHEBI:173112"/>
        <dbReference type="EC" id="2.7.7.7"/>
    </reaction>
</comment>
<comment type="cofactor">
    <cofactor>
        <name>Mg(2+)</name>
        <dbReference type="ChEBI" id="CHEBI:18420"/>
    </cofactor>
</comment>
<comment type="subcellular location">
    <subcellularLocation>
        <location>Mitochondrion</location>
    </subcellularLocation>
</comment>
<comment type="miscellaneous">
    <text>In eukaryotes there are five DNA polymerases: alpha, beta, gamma, delta, and epsilon which are responsible for different reactions of DNA synthesis.</text>
</comment>
<comment type="similarity">
    <text evidence="1">Belongs to the DNA polymerase type-A family.</text>
</comment>
<dbReference type="EC" id="2.7.7.7"/>
<dbReference type="EMBL" id="Z47976">
    <property type="protein sequence ID" value="CAA88012.1"/>
    <property type="molecule type" value="Genomic_DNA"/>
</dbReference>
<dbReference type="EMBL" id="CU329672">
    <property type="protein sequence ID" value="CAB76231.2"/>
    <property type="molecule type" value="Genomic_DNA"/>
</dbReference>
<dbReference type="PIR" id="JC4375">
    <property type="entry name" value="JC4375"/>
</dbReference>
<dbReference type="PIR" id="T50429">
    <property type="entry name" value="T50429"/>
</dbReference>
<dbReference type="RefSeq" id="NP_588025.2">
    <property type="nucleotide sequence ID" value="NM_001023016.2"/>
</dbReference>
<dbReference type="SMR" id="Q12704"/>
<dbReference type="BioGRID" id="275671">
    <property type="interactions" value="2"/>
</dbReference>
<dbReference type="FunCoup" id="Q12704">
    <property type="interactions" value="326"/>
</dbReference>
<dbReference type="STRING" id="284812.Q12704"/>
<dbReference type="iPTMnet" id="Q12704"/>
<dbReference type="PaxDb" id="4896-SPCC24B10.22.1"/>
<dbReference type="EnsemblFungi" id="SPCC24B10.22.1">
    <property type="protein sequence ID" value="SPCC24B10.22.1:pep"/>
    <property type="gene ID" value="SPCC24B10.22"/>
</dbReference>
<dbReference type="GeneID" id="2539099"/>
<dbReference type="KEGG" id="spo:2539099"/>
<dbReference type="PomBase" id="SPCC24B10.22"/>
<dbReference type="VEuPathDB" id="FungiDB:SPCC24B10.22"/>
<dbReference type="eggNOG" id="KOG3657">
    <property type="taxonomic scope" value="Eukaryota"/>
</dbReference>
<dbReference type="HOGENOM" id="CLU_001524_2_1_1"/>
<dbReference type="InParanoid" id="Q12704"/>
<dbReference type="OMA" id="AMHITNL"/>
<dbReference type="PhylomeDB" id="Q12704"/>
<dbReference type="PRO" id="PR:Q12704"/>
<dbReference type="Proteomes" id="UP000002485">
    <property type="component" value="Chromosome III"/>
</dbReference>
<dbReference type="GO" id="GO:0005760">
    <property type="term" value="C:gamma DNA polymerase complex"/>
    <property type="evidence" value="ECO:0007669"/>
    <property type="project" value="InterPro"/>
</dbReference>
<dbReference type="GO" id="GO:0005739">
    <property type="term" value="C:mitochondrion"/>
    <property type="evidence" value="ECO:0000314"/>
    <property type="project" value="PomBase"/>
</dbReference>
<dbReference type="GO" id="GO:0008408">
    <property type="term" value="F:3'-5' exonuclease activity"/>
    <property type="evidence" value="ECO:0000318"/>
    <property type="project" value="GO_Central"/>
</dbReference>
<dbReference type="GO" id="GO:0003677">
    <property type="term" value="F:DNA binding"/>
    <property type="evidence" value="ECO:0000250"/>
    <property type="project" value="PomBase"/>
</dbReference>
<dbReference type="GO" id="GO:0003887">
    <property type="term" value="F:DNA-directed DNA polymerase activity"/>
    <property type="evidence" value="ECO:0000318"/>
    <property type="project" value="GO_Central"/>
</dbReference>
<dbReference type="GO" id="GO:0006264">
    <property type="term" value="P:mitochondrial DNA replication"/>
    <property type="evidence" value="ECO:0000315"/>
    <property type="project" value="PomBase"/>
</dbReference>
<dbReference type="CDD" id="cd08641">
    <property type="entry name" value="DNA_pol_gammaA"/>
    <property type="match status" value="1"/>
</dbReference>
<dbReference type="FunFam" id="1.10.150.20:FF:000035">
    <property type="entry name" value="DNA polymerase gamma, mitochondrial"/>
    <property type="match status" value="1"/>
</dbReference>
<dbReference type="FunFam" id="3.30.420.390:FF:000003">
    <property type="entry name" value="DNA polymerase gamma, mitochondrial"/>
    <property type="match status" value="1"/>
</dbReference>
<dbReference type="Gene3D" id="3.30.420.390">
    <property type="match status" value="2"/>
</dbReference>
<dbReference type="Gene3D" id="3.30.70.370">
    <property type="match status" value="1"/>
</dbReference>
<dbReference type="Gene3D" id="1.10.150.20">
    <property type="entry name" value="5' to 3' exonuclease, C-terminal subdomain"/>
    <property type="match status" value="1"/>
</dbReference>
<dbReference type="InterPro" id="IPR002297">
    <property type="entry name" value="DNA-dir_DNA_pol_A_mt"/>
</dbReference>
<dbReference type="InterPro" id="IPR001098">
    <property type="entry name" value="DNA-dir_DNA_pol_A_palm_dom"/>
</dbReference>
<dbReference type="InterPro" id="IPR043502">
    <property type="entry name" value="DNA/RNA_pol_sf"/>
</dbReference>
<dbReference type="InterPro" id="IPR041336">
    <property type="entry name" value="DNApol_Exo"/>
</dbReference>
<dbReference type="InterPro" id="IPR047580">
    <property type="entry name" value="POLG_palm_dom"/>
</dbReference>
<dbReference type="InterPro" id="IPR012337">
    <property type="entry name" value="RNaseH-like_sf"/>
</dbReference>
<dbReference type="PANTHER" id="PTHR10267">
    <property type="entry name" value="DNA POLYMERASE SUBUNIT GAMMA-1"/>
    <property type="match status" value="1"/>
</dbReference>
<dbReference type="PANTHER" id="PTHR10267:SF0">
    <property type="entry name" value="DNA POLYMERASE SUBUNIT GAMMA-1"/>
    <property type="match status" value="1"/>
</dbReference>
<dbReference type="Pfam" id="PF00476">
    <property type="entry name" value="DNA_pol_A"/>
    <property type="match status" value="1"/>
</dbReference>
<dbReference type="Pfam" id="PF18136">
    <property type="entry name" value="DNApol_Exo"/>
    <property type="match status" value="1"/>
</dbReference>
<dbReference type="PRINTS" id="PR00867">
    <property type="entry name" value="DNAPOLG"/>
</dbReference>
<dbReference type="SMART" id="SM00482">
    <property type="entry name" value="POLAc"/>
    <property type="match status" value="1"/>
</dbReference>
<dbReference type="SUPFAM" id="SSF56672">
    <property type="entry name" value="DNA/RNA polymerases"/>
    <property type="match status" value="1"/>
</dbReference>
<dbReference type="SUPFAM" id="SSF53098">
    <property type="entry name" value="Ribonuclease H-like"/>
    <property type="match status" value="1"/>
</dbReference>
<accession>Q12704</accession>
<accession>Q96WV3</accession>
<accession>Q9P7I4</accession>
<sequence>MFYKACPSTLTCSKWIHSIIKTKKFLYCRHYSSKSFIDNAPLRINPVGVQYLSPALQNQVFPQQNTQISQLHLDLAKFHLAKHQLLNKETIKLPSFNFRLPPLQGKTISEHFYNIGLEFAEPHLSKAIKFSKIDTPVQPKTWKRQPGWTKYAKDGSISCVPYPDSDCMVFDVEVLYKVSPFAVVATAVSEDAWYCWLSPWLLGKSENDRQLIPSNPKGALFVGHNVSFDRQRIREEYNIKSSRNVFLDTMSLHVATHGMCSRQKPTWFKARKAYIRSQSTETSEDDDSSSFDDDYQNYLKQEPWLAHSSVNSLKDVAKFHCNITLDKSKRDDFASLEKEPILQKLNELITYCAHDTYSTHQVFKKVFPQFLEVCPHPATFSAMLSLGSVFLPVNHSWTRYINGVEEQYQQMIQLVDQKLSQYAEKAKDLINTKDTVLKDPWLRQLDWTPCNLYRKLKKATQEVPVVPKWYKKAYCKTEKRAVITAKSRLAPILLRLKWKKHPLAWSDTYGWVFSVERTSKDEIEMLLDQGLVPCSREEDTKLDYNNYIFFKVPHKDGPEARCGSPLSKSYQRYFEEGILQSDYEVAKKALEMSASCSYWSSARDRIRSQMVVWDKDAELGVPSSVDGFGIILPCIIPMGTVTRRAVENTWLTASNSKKNRLGSELKAMIRAPDGYTFVGADVDSEELWIVALMGDSQFRLHGATALGMMTLEGKKSEGTDLHSKTAAILGVSRDSAKVFNYGRLYGAGLKHTTLLLMQMNPTLKTAEAKELAKKLYASTKGVKSKMSKRLQEMGLPKLTFWSQGTESFVFNKLEAMAQLPSPRTPVLDAGITQALSSKNLSKNSFMTSRVNWAIQSSAVDYLHLLLVSMNHLIKKYYLEARLSLTVHDEVRYLSSDKDKYRVAFALQVANLWTRAFFCQRLGINELPQSVAFFSSVDIDHVLRKDVKMDCVTPSNKVPIPPGEELTIESVLEKLEQSGQSLEPLEQIQCFVDVKATTSAEITEEDKKNIAYLKAQAFY</sequence>
<proteinExistence type="inferred from homology"/>
<feature type="chain" id="PRO_0000101277" description="DNA polymerase gamma">
    <location>
        <begin position="1"/>
        <end position="1018"/>
    </location>
</feature>
<feature type="sequence conflict" description="In Ref. 1; CAA88012." evidence="1" ref="1">
    <original>G</original>
    <variation>C</variation>
    <location>
        <position position="563"/>
    </location>
</feature>
<feature type="sequence conflict" description="In Ref. 1; CAA88012." evidence="1" ref="1">
    <original>QR</original>
    <variation>HA</variation>
    <location>
        <begin position="571"/>
        <end position="572"/>
    </location>
</feature>
<feature type="sequence conflict" description="In Ref. 1; CAA88012." evidence="1" ref="1">
    <original>T</original>
    <variation>Q</variation>
    <location>
        <position position="832"/>
    </location>
</feature>
<organism>
    <name type="scientific">Schizosaccharomyces pombe (strain 972 / ATCC 24843)</name>
    <name type="common">Fission yeast</name>
    <dbReference type="NCBI Taxonomy" id="284812"/>
    <lineage>
        <taxon>Eukaryota</taxon>
        <taxon>Fungi</taxon>
        <taxon>Dikarya</taxon>
        <taxon>Ascomycota</taxon>
        <taxon>Taphrinomycotina</taxon>
        <taxon>Schizosaccharomycetes</taxon>
        <taxon>Schizosaccharomycetales</taxon>
        <taxon>Schizosaccharomycetaceae</taxon>
        <taxon>Schizosaccharomyces</taxon>
    </lineage>
</organism>